<dbReference type="EMBL" id="AM999171">
    <property type="protein sequence ID" value="CAQ53533.1"/>
    <property type="molecule type" value="Genomic_DNA"/>
</dbReference>
<dbReference type="EMBL" id="CM000366">
    <property type="protein sequence ID" value="EDX17647.1"/>
    <property type="status" value="ALT_SEQ"/>
    <property type="molecule type" value="Genomic_DNA"/>
</dbReference>
<dbReference type="SMR" id="B4R345"/>
<dbReference type="STRING" id="7240.B4R345"/>
<dbReference type="GeneID" id="6725682"/>
<dbReference type="CTD" id="79876"/>
<dbReference type="OrthoDB" id="206053at2759"/>
<dbReference type="Proteomes" id="UP000000304">
    <property type="component" value="Chromosome X"/>
</dbReference>
<dbReference type="GO" id="GO:0005829">
    <property type="term" value="C:cytosol"/>
    <property type="evidence" value="ECO:0007669"/>
    <property type="project" value="TreeGrafter"/>
</dbReference>
<dbReference type="GO" id="GO:0005524">
    <property type="term" value="F:ATP binding"/>
    <property type="evidence" value="ECO:0007669"/>
    <property type="project" value="UniProtKB-KW"/>
</dbReference>
<dbReference type="GO" id="GO:0046872">
    <property type="term" value="F:metal ion binding"/>
    <property type="evidence" value="ECO:0007669"/>
    <property type="project" value="UniProtKB-KW"/>
</dbReference>
<dbReference type="GO" id="GO:0071566">
    <property type="term" value="F:UFM1 activating enzyme activity"/>
    <property type="evidence" value="ECO:0007669"/>
    <property type="project" value="TreeGrafter"/>
</dbReference>
<dbReference type="GO" id="GO:0050905">
    <property type="term" value="P:neuromuscular process"/>
    <property type="evidence" value="ECO:0007669"/>
    <property type="project" value="EnsemblMetazoa"/>
</dbReference>
<dbReference type="GO" id="GO:0071569">
    <property type="term" value="P:protein ufmylation"/>
    <property type="evidence" value="ECO:0007669"/>
    <property type="project" value="TreeGrafter"/>
</dbReference>
<dbReference type="CDD" id="cd00757">
    <property type="entry name" value="ThiF_MoeB_HesA_family"/>
    <property type="match status" value="1"/>
</dbReference>
<dbReference type="FunFam" id="3.40.50.720:FF:000066">
    <property type="entry name" value="Putative ubiquitin-like modifier-activating enzyme 5"/>
    <property type="match status" value="1"/>
</dbReference>
<dbReference type="Gene3D" id="3.40.50.720">
    <property type="entry name" value="NAD(P)-binding Rossmann-like Domain"/>
    <property type="match status" value="1"/>
</dbReference>
<dbReference type="InterPro" id="IPR029752">
    <property type="entry name" value="D-isomer_DH_CS1"/>
</dbReference>
<dbReference type="InterPro" id="IPR045886">
    <property type="entry name" value="ThiF/MoeB/HesA"/>
</dbReference>
<dbReference type="InterPro" id="IPR000594">
    <property type="entry name" value="ThiF_NAD_FAD-bd"/>
</dbReference>
<dbReference type="InterPro" id="IPR035985">
    <property type="entry name" value="Ubiquitin-activating_enz"/>
</dbReference>
<dbReference type="PANTHER" id="PTHR10953">
    <property type="entry name" value="UBIQUITIN-ACTIVATING ENZYME E1"/>
    <property type="match status" value="1"/>
</dbReference>
<dbReference type="PANTHER" id="PTHR10953:SF9">
    <property type="entry name" value="UBIQUITIN-LIKE MODIFIER-ACTIVATING ENZYME 5"/>
    <property type="match status" value="1"/>
</dbReference>
<dbReference type="Pfam" id="PF00899">
    <property type="entry name" value="ThiF"/>
    <property type="match status" value="1"/>
</dbReference>
<dbReference type="SUPFAM" id="SSF69572">
    <property type="entry name" value="Activating enzymes of the ubiquitin-like proteins"/>
    <property type="match status" value="1"/>
</dbReference>
<accession>B4R345</accession>
<accession>B4F5T5</accession>
<organism>
    <name type="scientific">Drosophila simulans</name>
    <name type="common">Fruit fly</name>
    <dbReference type="NCBI Taxonomy" id="7240"/>
    <lineage>
        <taxon>Eukaryota</taxon>
        <taxon>Metazoa</taxon>
        <taxon>Ecdysozoa</taxon>
        <taxon>Arthropoda</taxon>
        <taxon>Hexapoda</taxon>
        <taxon>Insecta</taxon>
        <taxon>Pterygota</taxon>
        <taxon>Neoptera</taxon>
        <taxon>Endopterygota</taxon>
        <taxon>Diptera</taxon>
        <taxon>Brachycera</taxon>
        <taxon>Muscomorpha</taxon>
        <taxon>Ephydroidea</taxon>
        <taxon>Drosophilidae</taxon>
        <taxon>Drosophila</taxon>
        <taxon>Sophophora</taxon>
    </lineage>
</organism>
<comment type="function">
    <text evidence="1">E1-like enzyme which activates UFM1.</text>
</comment>
<comment type="similarity">
    <text evidence="4">Belongs to the ubiquitin-activating E1 family. UBA5 subfamily.</text>
</comment>
<comment type="sequence caution" evidence="4">
    <conflict type="erroneous gene model prediction">
        <sequence resource="EMBL-CDS" id="EDX17647"/>
    </conflict>
</comment>
<reference key="1">
    <citation type="journal article" date="2008" name="Mol. Biol. Evol.">
        <title>Effects of X-linkage and sex-biased gene expression on the rate of adaptive protein evolution in Drosophila.</title>
        <authorList>
            <person name="Baines J.F."/>
            <person name="Sawyer S.A."/>
            <person name="Hartl D.L."/>
            <person name="Parsch J."/>
        </authorList>
    </citation>
    <scope>NUCLEOTIDE SEQUENCE [GENOMIC DNA]</scope>
    <scope>VARIANT ALA-111</scope>
    <source>
        <strain>S1</strain>
    </source>
</reference>
<reference key="2">
    <citation type="journal article" date="2007" name="Nature">
        <title>Evolution of genes and genomes on the Drosophila phylogeny.</title>
        <authorList>
            <consortium name="Drosophila 12 genomes consortium"/>
        </authorList>
    </citation>
    <scope>NUCLEOTIDE SEQUENCE [LARGE SCALE GENOMIC DNA]</scope>
</reference>
<feature type="chain" id="PRO_0000391949" description="Ubiquitin-like modifier-activating enzyme 5">
    <location>
        <begin position="1"/>
        <end position="404"/>
    </location>
</feature>
<feature type="region of interest" description="Disordered" evidence="2">
    <location>
        <begin position="372"/>
        <end position="393"/>
    </location>
</feature>
<feature type="compositionally biased region" description="Low complexity" evidence="2">
    <location>
        <begin position="382"/>
        <end position="391"/>
    </location>
</feature>
<feature type="active site" description="Glycyl thioester intermediate" evidence="1">
    <location>
        <position position="250"/>
    </location>
</feature>
<feature type="binding site" evidence="1">
    <location>
        <position position="83"/>
    </location>
    <ligand>
        <name>ATP</name>
        <dbReference type="ChEBI" id="CHEBI:30616"/>
    </ligand>
</feature>
<feature type="binding site" evidence="1">
    <location>
        <position position="104"/>
    </location>
    <ligand>
        <name>ATP</name>
        <dbReference type="ChEBI" id="CHEBI:30616"/>
    </ligand>
</feature>
<feature type="binding site" evidence="1">
    <location>
        <position position="127"/>
    </location>
    <ligand>
        <name>ATP</name>
        <dbReference type="ChEBI" id="CHEBI:30616"/>
    </ligand>
</feature>
<feature type="binding site" evidence="1">
    <location>
        <position position="150"/>
    </location>
    <ligand>
        <name>ATP</name>
        <dbReference type="ChEBI" id="CHEBI:30616"/>
    </ligand>
</feature>
<feature type="binding site" evidence="1">
    <location>
        <position position="184"/>
    </location>
    <ligand>
        <name>ATP</name>
        <dbReference type="ChEBI" id="CHEBI:30616"/>
    </ligand>
</feature>
<feature type="binding site" evidence="1">
    <location>
        <position position="226"/>
    </location>
    <ligand>
        <name>Zn(2+)</name>
        <dbReference type="ChEBI" id="CHEBI:29105"/>
    </ligand>
</feature>
<feature type="binding site" evidence="1">
    <location>
        <position position="229"/>
    </location>
    <ligand>
        <name>Zn(2+)</name>
        <dbReference type="ChEBI" id="CHEBI:29105"/>
    </ligand>
</feature>
<feature type="binding site" evidence="1">
    <location>
        <position position="303"/>
    </location>
    <ligand>
        <name>Zn(2+)</name>
        <dbReference type="ChEBI" id="CHEBI:29105"/>
    </ligand>
</feature>
<feature type="binding site" evidence="1">
    <location>
        <position position="308"/>
    </location>
    <ligand>
        <name>Zn(2+)</name>
        <dbReference type="ChEBI" id="CHEBI:29105"/>
    </ligand>
</feature>
<feature type="sequence variant" description="In strain: S1." evidence="3">
    <original>D</original>
    <variation>A</variation>
    <location>
        <position position="111"/>
    </location>
</feature>
<gene>
    <name type="ORF">GD17028</name>
</gene>
<keyword id="KW-0067">ATP-binding</keyword>
<keyword id="KW-0479">Metal-binding</keyword>
<keyword id="KW-0547">Nucleotide-binding</keyword>
<keyword id="KW-1185">Reference proteome</keyword>
<keyword id="KW-0833">Ubl conjugation pathway</keyword>
<keyword id="KW-0862">Zinc</keyword>
<protein>
    <recommendedName>
        <fullName>Ubiquitin-like modifier-activating enzyme 5</fullName>
        <shortName>Ubiquitin-activating enzyme 5</shortName>
    </recommendedName>
</protein>
<evidence type="ECO:0000250" key="1"/>
<evidence type="ECO:0000256" key="2">
    <source>
        <dbReference type="SAM" id="MobiDB-lite"/>
    </source>
</evidence>
<evidence type="ECO:0000269" key="3">
    <source>
    </source>
</evidence>
<evidence type="ECO:0000305" key="4"/>
<sequence>MSHAIDELQAIIADLKTELETEPKSSVGVASNSRLARDRIDRMSAEVVDSNPYSRLMALQRMNIVKDYERIRDKAVAIVGVGGVGSVTADMLTRCGIGKLILFDYDKVELDNMNRLFFTPDQAGLSKVAAAAATLSFINPDVEIETHNYNITTVENFDRFLDTISQGGRIAGQPVDLVLSCVDNFEARMAINAACNERNLNWFESGVSENAVSGHIQFIRPGDTACFACAPPLVVAENIDEKTLKREGVCAASLPTTMGITAGFLVQNALKYLLNFGEVSDYLGYNALSDFFPKMTLKPNPQCDDRNCIVRQKEFQARPKPVVIEEKAVSEEPLHATNEWGIELVAEDAPQSNPTPAETPVMGEGLRLAYEAPEKSSETSEETVTAATADETSLEDLMAQMKSM</sequence>
<name>UBA5_DROSI</name>
<proteinExistence type="inferred from homology"/>